<feature type="chain" id="PRO_0000348414" description="Glyoxylate/hydroxypyruvate reductase B">
    <location>
        <begin position="1"/>
        <end position="326"/>
    </location>
</feature>
<feature type="active site" evidence="1">
    <location>
        <position position="237"/>
    </location>
</feature>
<feature type="active site" evidence="1">
    <location>
        <position position="266"/>
    </location>
</feature>
<feature type="active site" description="Proton donor" evidence="1">
    <location>
        <position position="285"/>
    </location>
</feature>
<evidence type="ECO:0000255" key="1">
    <source>
        <dbReference type="HAMAP-Rule" id="MF_01667"/>
    </source>
</evidence>
<organism>
    <name type="scientific">Yersinia pseudotuberculosis serotype O:3 (strain YPIII)</name>
    <dbReference type="NCBI Taxonomy" id="502800"/>
    <lineage>
        <taxon>Bacteria</taxon>
        <taxon>Pseudomonadati</taxon>
        <taxon>Pseudomonadota</taxon>
        <taxon>Gammaproteobacteria</taxon>
        <taxon>Enterobacterales</taxon>
        <taxon>Yersiniaceae</taxon>
        <taxon>Yersinia</taxon>
    </lineage>
</organism>
<name>GHRB_YERPY</name>
<accession>B1JH01</accession>
<sequence>MKPSIVLYKSIPTDLHQRLAQHFTVNSFDGLTPDNQPELLAALQQAEGLIGSGGKIDQDFLQLAPNLRAASTISVGYDNFDVEALSQRGIALMHTPTVLTETVADTMMALMLSTARRVVELAERVKAGEWQESIGDDWFGVDVHHKTIGILGMGRIGMALAQRAHFGFSMPVLYTSRRPHEAAEQRFGARHCSLDTLLAEADFLCITLPMTEQTYHMIGREQLAKIKSSAILINAGRGPVVDEQALIAALQDGTIHAAGLDVFEQEPLPVDSPLLTLRNVVAVPHIGSATHETRYNMAACAVDNLINALTGTVKENCVNPQVLITH</sequence>
<proteinExistence type="inferred from homology"/>
<reference key="1">
    <citation type="submission" date="2008-02" db="EMBL/GenBank/DDBJ databases">
        <title>Complete sequence of Yersinia pseudotuberculosis YPIII.</title>
        <authorList>
            <consortium name="US DOE Joint Genome Institute"/>
            <person name="Copeland A."/>
            <person name="Lucas S."/>
            <person name="Lapidus A."/>
            <person name="Glavina del Rio T."/>
            <person name="Dalin E."/>
            <person name="Tice H."/>
            <person name="Bruce D."/>
            <person name="Goodwin L."/>
            <person name="Pitluck S."/>
            <person name="Munk A.C."/>
            <person name="Brettin T."/>
            <person name="Detter J.C."/>
            <person name="Han C."/>
            <person name="Tapia R."/>
            <person name="Schmutz J."/>
            <person name="Larimer F."/>
            <person name="Land M."/>
            <person name="Hauser L."/>
            <person name="Challacombe J.F."/>
            <person name="Green L."/>
            <person name="Lindler L.E."/>
            <person name="Nikolich M.P."/>
            <person name="Richardson P."/>
        </authorList>
    </citation>
    <scope>NUCLEOTIDE SEQUENCE [LARGE SCALE GENOMIC DNA]</scope>
    <source>
        <strain>YPIII</strain>
    </source>
</reference>
<protein>
    <recommendedName>
        <fullName evidence="1">Glyoxylate/hydroxypyruvate reductase B</fullName>
        <ecNumber evidence="1">1.1.1.79</ecNumber>
        <ecNumber evidence="1">1.1.1.81</ecNumber>
    </recommendedName>
</protein>
<gene>
    <name evidence="1" type="primary">ghrB</name>
    <name type="ordered locus">YPK_0017</name>
</gene>
<keyword id="KW-0963">Cytoplasm</keyword>
<keyword id="KW-0520">NAD</keyword>
<keyword id="KW-0521">NADP</keyword>
<keyword id="KW-0560">Oxidoreductase</keyword>
<comment type="function">
    <text evidence="1">Catalyzes the NADPH-dependent reduction of glyoxylate and hydroxypyruvate into glycolate and glycerate, respectively.</text>
</comment>
<comment type="catalytic activity">
    <reaction evidence="1">
        <text>glycolate + NADP(+) = glyoxylate + NADPH + H(+)</text>
        <dbReference type="Rhea" id="RHEA:10992"/>
        <dbReference type="ChEBI" id="CHEBI:15378"/>
        <dbReference type="ChEBI" id="CHEBI:29805"/>
        <dbReference type="ChEBI" id="CHEBI:36655"/>
        <dbReference type="ChEBI" id="CHEBI:57783"/>
        <dbReference type="ChEBI" id="CHEBI:58349"/>
        <dbReference type="EC" id="1.1.1.79"/>
    </reaction>
</comment>
<comment type="catalytic activity">
    <reaction evidence="1">
        <text>(R)-glycerate + NAD(+) = 3-hydroxypyruvate + NADH + H(+)</text>
        <dbReference type="Rhea" id="RHEA:17905"/>
        <dbReference type="ChEBI" id="CHEBI:15378"/>
        <dbReference type="ChEBI" id="CHEBI:16659"/>
        <dbReference type="ChEBI" id="CHEBI:17180"/>
        <dbReference type="ChEBI" id="CHEBI:57540"/>
        <dbReference type="ChEBI" id="CHEBI:57945"/>
        <dbReference type="EC" id="1.1.1.81"/>
    </reaction>
</comment>
<comment type="catalytic activity">
    <reaction evidence="1">
        <text>(R)-glycerate + NADP(+) = 3-hydroxypyruvate + NADPH + H(+)</text>
        <dbReference type="Rhea" id="RHEA:18657"/>
        <dbReference type="ChEBI" id="CHEBI:15378"/>
        <dbReference type="ChEBI" id="CHEBI:16659"/>
        <dbReference type="ChEBI" id="CHEBI:17180"/>
        <dbReference type="ChEBI" id="CHEBI:57783"/>
        <dbReference type="ChEBI" id="CHEBI:58349"/>
        <dbReference type="EC" id="1.1.1.81"/>
    </reaction>
</comment>
<comment type="subunit">
    <text evidence="1">Homodimer.</text>
</comment>
<comment type="subcellular location">
    <subcellularLocation>
        <location evidence="1">Cytoplasm</location>
    </subcellularLocation>
</comment>
<comment type="similarity">
    <text evidence="1">Belongs to the D-isomer specific 2-hydroxyacid dehydrogenase family. GhrB subfamily.</text>
</comment>
<dbReference type="EC" id="1.1.1.79" evidence="1"/>
<dbReference type="EC" id="1.1.1.81" evidence="1"/>
<dbReference type="EMBL" id="CP000950">
    <property type="protein sequence ID" value="ACA66331.1"/>
    <property type="molecule type" value="Genomic_DNA"/>
</dbReference>
<dbReference type="RefSeq" id="WP_012303319.1">
    <property type="nucleotide sequence ID" value="NZ_CP009792.1"/>
</dbReference>
<dbReference type="SMR" id="B1JH01"/>
<dbReference type="KEGG" id="ypy:YPK_0017"/>
<dbReference type="PATRIC" id="fig|502800.11.peg.619"/>
<dbReference type="GO" id="GO:0005829">
    <property type="term" value="C:cytosol"/>
    <property type="evidence" value="ECO:0007669"/>
    <property type="project" value="TreeGrafter"/>
</dbReference>
<dbReference type="GO" id="GO:0005886">
    <property type="term" value="C:plasma membrane"/>
    <property type="evidence" value="ECO:0007669"/>
    <property type="project" value="UniProtKB-UniRule"/>
</dbReference>
<dbReference type="GO" id="GO:0030267">
    <property type="term" value="F:glyoxylate reductase (NADPH) activity"/>
    <property type="evidence" value="ECO:0007669"/>
    <property type="project" value="UniProtKB-UniRule"/>
</dbReference>
<dbReference type="GO" id="GO:0008465">
    <property type="term" value="F:hydroxypyruvate reductase (NADH) activity"/>
    <property type="evidence" value="ECO:0007669"/>
    <property type="project" value="RHEA"/>
</dbReference>
<dbReference type="GO" id="GO:0120509">
    <property type="term" value="F:hydroxypyruvate reductase (NADPH) activity"/>
    <property type="evidence" value="ECO:0007669"/>
    <property type="project" value="RHEA"/>
</dbReference>
<dbReference type="GO" id="GO:0051287">
    <property type="term" value="F:NAD binding"/>
    <property type="evidence" value="ECO:0007669"/>
    <property type="project" value="InterPro"/>
</dbReference>
<dbReference type="CDD" id="cd05301">
    <property type="entry name" value="GDH"/>
    <property type="match status" value="1"/>
</dbReference>
<dbReference type="FunFam" id="3.40.50.720:FF:000026">
    <property type="entry name" value="Glyoxylate/hydroxypyruvate reductase B"/>
    <property type="match status" value="1"/>
</dbReference>
<dbReference type="Gene3D" id="3.40.50.720">
    <property type="entry name" value="NAD(P)-binding Rossmann-like Domain"/>
    <property type="match status" value="2"/>
</dbReference>
<dbReference type="HAMAP" id="MF_01667">
    <property type="entry name" value="2_Hacid_dh_C_GhrB"/>
    <property type="match status" value="1"/>
</dbReference>
<dbReference type="InterPro" id="IPR050223">
    <property type="entry name" value="D-isomer_2-hydroxyacid_DH"/>
</dbReference>
<dbReference type="InterPro" id="IPR006139">
    <property type="entry name" value="D-isomer_2_OHA_DH_cat_dom"/>
</dbReference>
<dbReference type="InterPro" id="IPR029752">
    <property type="entry name" value="D-isomer_DH_CS1"/>
</dbReference>
<dbReference type="InterPro" id="IPR006140">
    <property type="entry name" value="D-isomer_DH_NAD-bd"/>
</dbReference>
<dbReference type="InterPro" id="IPR023756">
    <property type="entry name" value="Glyo/OHPyrv_Rdtase_B"/>
</dbReference>
<dbReference type="InterPro" id="IPR036291">
    <property type="entry name" value="NAD(P)-bd_dom_sf"/>
</dbReference>
<dbReference type="NCBIfam" id="NF011938">
    <property type="entry name" value="PRK15409.1"/>
    <property type="match status" value="1"/>
</dbReference>
<dbReference type="PANTHER" id="PTHR10996">
    <property type="entry name" value="2-HYDROXYACID DEHYDROGENASE-RELATED"/>
    <property type="match status" value="1"/>
</dbReference>
<dbReference type="PANTHER" id="PTHR10996:SF283">
    <property type="entry name" value="GLYOXYLATE_HYDROXYPYRUVATE REDUCTASE B"/>
    <property type="match status" value="1"/>
</dbReference>
<dbReference type="Pfam" id="PF00389">
    <property type="entry name" value="2-Hacid_dh"/>
    <property type="match status" value="1"/>
</dbReference>
<dbReference type="Pfam" id="PF02826">
    <property type="entry name" value="2-Hacid_dh_C"/>
    <property type="match status" value="1"/>
</dbReference>
<dbReference type="SUPFAM" id="SSF52283">
    <property type="entry name" value="Formate/glycerate dehydrogenase catalytic domain-like"/>
    <property type="match status" value="1"/>
</dbReference>
<dbReference type="SUPFAM" id="SSF51735">
    <property type="entry name" value="NAD(P)-binding Rossmann-fold domains"/>
    <property type="match status" value="1"/>
</dbReference>
<dbReference type="PROSITE" id="PS00065">
    <property type="entry name" value="D_2_HYDROXYACID_DH_1"/>
    <property type="match status" value="1"/>
</dbReference>